<reference key="1">
    <citation type="journal article" date="2005" name="J. Bacteriol.">
        <title>Insights on evolution of virulence and resistance from the complete genome analysis of an early methicillin-resistant Staphylococcus aureus strain and a biofilm-producing methicillin-resistant Staphylococcus epidermidis strain.</title>
        <authorList>
            <person name="Gill S.R."/>
            <person name="Fouts D.E."/>
            <person name="Archer G.L."/>
            <person name="Mongodin E.F."/>
            <person name="DeBoy R.T."/>
            <person name="Ravel J."/>
            <person name="Paulsen I.T."/>
            <person name="Kolonay J.F."/>
            <person name="Brinkac L.M."/>
            <person name="Beanan M.J."/>
            <person name="Dodson R.J."/>
            <person name="Daugherty S.C."/>
            <person name="Madupu R."/>
            <person name="Angiuoli S.V."/>
            <person name="Durkin A.S."/>
            <person name="Haft D.H."/>
            <person name="Vamathevan J.J."/>
            <person name="Khouri H."/>
            <person name="Utterback T.R."/>
            <person name="Lee C."/>
            <person name="Dimitrov G."/>
            <person name="Jiang L."/>
            <person name="Qin H."/>
            <person name="Weidman J."/>
            <person name="Tran K."/>
            <person name="Kang K.H."/>
            <person name="Hance I.R."/>
            <person name="Nelson K.E."/>
            <person name="Fraser C.M."/>
        </authorList>
    </citation>
    <scope>NUCLEOTIDE SEQUENCE [LARGE SCALE GENOMIC DNA]</scope>
    <source>
        <strain>ATCC 35984 / DSM 28319 / BCRC 17069 / CCUG 31568 / BM 3577 / RP62A</strain>
    </source>
</reference>
<gene>
    <name evidence="1" type="primary">rpoZ</name>
    <name type="ordered locus">SERP0777</name>
</gene>
<organism>
    <name type="scientific">Staphylococcus epidermidis (strain ATCC 35984 / DSM 28319 / BCRC 17069 / CCUG 31568 / BM 3577 / RP62A)</name>
    <dbReference type="NCBI Taxonomy" id="176279"/>
    <lineage>
        <taxon>Bacteria</taxon>
        <taxon>Bacillati</taxon>
        <taxon>Bacillota</taxon>
        <taxon>Bacilli</taxon>
        <taxon>Bacillales</taxon>
        <taxon>Staphylococcaceae</taxon>
        <taxon>Staphylococcus</taxon>
    </lineage>
</organism>
<dbReference type="EC" id="2.7.7.6" evidence="1"/>
<dbReference type="EMBL" id="CP000029">
    <property type="protein sequence ID" value="AAW54188.1"/>
    <property type="molecule type" value="Genomic_DNA"/>
</dbReference>
<dbReference type="RefSeq" id="WP_002446252.1">
    <property type="nucleotide sequence ID" value="NC_002976.3"/>
</dbReference>
<dbReference type="SMR" id="Q5HPY0"/>
<dbReference type="STRING" id="176279.SERP0777"/>
<dbReference type="KEGG" id="ser:SERP0777"/>
<dbReference type="eggNOG" id="COG1758">
    <property type="taxonomic scope" value="Bacteria"/>
</dbReference>
<dbReference type="HOGENOM" id="CLU_125406_6_0_9"/>
<dbReference type="Proteomes" id="UP000000531">
    <property type="component" value="Chromosome"/>
</dbReference>
<dbReference type="GO" id="GO:0000428">
    <property type="term" value="C:DNA-directed RNA polymerase complex"/>
    <property type="evidence" value="ECO:0007669"/>
    <property type="project" value="UniProtKB-KW"/>
</dbReference>
<dbReference type="GO" id="GO:0003677">
    <property type="term" value="F:DNA binding"/>
    <property type="evidence" value="ECO:0007669"/>
    <property type="project" value="UniProtKB-UniRule"/>
</dbReference>
<dbReference type="GO" id="GO:0003899">
    <property type="term" value="F:DNA-directed RNA polymerase activity"/>
    <property type="evidence" value="ECO:0007669"/>
    <property type="project" value="UniProtKB-UniRule"/>
</dbReference>
<dbReference type="GO" id="GO:0006351">
    <property type="term" value="P:DNA-templated transcription"/>
    <property type="evidence" value="ECO:0007669"/>
    <property type="project" value="UniProtKB-UniRule"/>
</dbReference>
<dbReference type="Gene3D" id="3.90.940.10">
    <property type="match status" value="1"/>
</dbReference>
<dbReference type="HAMAP" id="MF_00366">
    <property type="entry name" value="RNApol_bact_RpoZ"/>
    <property type="match status" value="1"/>
</dbReference>
<dbReference type="InterPro" id="IPR003716">
    <property type="entry name" value="DNA-dir_RNA_pol_omega"/>
</dbReference>
<dbReference type="InterPro" id="IPR006110">
    <property type="entry name" value="Pol_omega/Rpo6/RPB6"/>
</dbReference>
<dbReference type="InterPro" id="IPR036161">
    <property type="entry name" value="RPB6/omega-like_sf"/>
</dbReference>
<dbReference type="NCBIfam" id="TIGR00690">
    <property type="entry name" value="rpoZ"/>
    <property type="match status" value="1"/>
</dbReference>
<dbReference type="PANTHER" id="PTHR34476">
    <property type="entry name" value="DNA-DIRECTED RNA POLYMERASE SUBUNIT OMEGA"/>
    <property type="match status" value="1"/>
</dbReference>
<dbReference type="PANTHER" id="PTHR34476:SF1">
    <property type="entry name" value="DNA-DIRECTED RNA POLYMERASE SUBUNIT OMEGA"/>
    <property type="match status" value="1"/>
</dbReference>
<dbReference type="Pfam" id="PF01192">
    <property type="entry name" value="RNA_pol_Rpb6"/>
    <property type="match status" value="1"/>
</dbReference>
<dbReference type="SMART" id="SM01409">
    <property type="entry name" value="RNA_pol_Rpb6"/>
    <property type="match status" value="1"/>
</dbReference>
<dbReference type="SUPFAM" id="SSF63562">
    <property type="entry name" value="RPB6/omega subunit-like"/>
    <property type="match status" value="1"/>
</dbReference>
<keyword id="KW-0240">DNA-directed RNA polymerase</keyword>
<keyword id="KW-0548">Nucleotidyltransferase</keyword>
<keyword id="KW-1185">Reference proteome</keyword>
<keyword id="KW-0804">Transcription</keyword>
<keyword id="KW-0808">Transferase</keyword>
<feature type="chain" id="PRO_0000128984" description="DNA-directed RNA polymerase subunit omega">
    <location>
        <begin position="1"/>
        <end position="70"/>
    </location>
</feature>
<comment type="function">
    <text evidence="1">Promotes RNA polymerase assembly. Latches the N- and C-terminal regions of the beta' subunit thereby facilitating its interaction with the beta and alpha subunits.</text>
</comment>
<comment type="catalytic activity">
    <reaction evidence="1">
        <text>RNA(n) + a ribonucleoside 5'-triphosphate = RNA(n+1) + diphosphate</text>
        <dbReference type="Rhea" id="RHEA:21248"/>
        <dbReference type="Rhea" id="RHEA-COMP:14527"/>
        <dbReference type="Rhea" id="RHEA-COMP:17342"/>
        <dbReference type="ChEBI" id="CHEBI:33019"/>
        <dbReference type="ChEBI" id="CHEBI:61557"/>
        <dbReference type="ChEBI" id="CHEBI:140395"/>
        <dbReference type="EC" id="2.7.7.6"/>
    </reaction>
</comment>
<comment type="subunit">
    <text evidence="1">The RNAP catalytic core consists of 2 alpha, 1 beta, 1 beta' and 1 omega subunit. When a sigma factor is associated with the core the holoenzyme is formed, which can initiate transcription.</text>
</comment>
<comment type="similarity">
    <text evidence="1">Belongs to the RNA polymerase subunit omega family.</text>
</comment>
<name>RPOZ_STAEQ</name>
<evidence type="ECO:0000255" key="1">
    <source>
        <dbReference type="HAMAP-Rule" id="MF_00366"/>
    </source>
</evidence>
<protein>
    <recommendedName>
        <fullName evidence="1">DNA-directed RNA polymerase subunit omega</fullName>
        <shortName evidence="1">RNAP omega subunit</shortName>
        <ecNumber evidence="1">2.7.7.6</ecNumber>
    </recommendedName>
    <alternativeName>
        <fullName evidence="1">RNA polymerase omega subunit</fullName>
    </alternativeName>
    <alternativeName>
        <fullName evidence="1">Transcriptase subunit omega</fullName>
    </alternativeName>
</protein>
<accession>Q5HPY0</accession>
<sequence length="70" mass="7766">MLNPPLNQLTAKVNSKYLIATTAAKRARELDERRETALLDQYQSAKPVGKALEEIADGKIEPVVPKEYLG</sequence>
<proteinExistence type="inferred from homology"/>